<proteinExistence type="inferred from homology"/>
<organism>
    <name type="scientific">Acinetobacter baumannii (strain ATCC 17978 / DSM 105126 / CIP 53.77 / LMG 1025 / NCDC KC755 / 5377)</name>
    <dbReference type="NCBI Taxonomy" id="400667"/>
    <lineage>
        <taxon>Bacteria</taxon>
        <taxon>Pseudomonadati</taxon>
        <taxon>Pseudomonadota</taxon>
        <taxon>Gammaproteobacteria</taxon>
        <taxon>Moraxellales</taxon>
        <taxon>Moraxellaceae</taxon>
        <taxon>Acinetobacter</taxon>
        <taxon>Acinetobacter calcoaceticus/baumannii complex</taxon>
    </lineage>
</organism>
<comment type="function">
    <text evidence="1">Catalyzes the conversion of oxaloacetate (OAA) to phosphoenolpyruvate (PEP), the rate-limiting step in the metabolic pathway that produces glucose from lactate and other precursors derived from the citric acid cycle.</text>
</comment>
<comment type="catalytic activity">
    <reaction evidence="1">
        <text>oxaloacetate + GTP = phosphoenolpyruvate + GDP + CO2</text>
        <dbReference type="Rhea" id="RHEA:10388"/>
        <dbReference type="ChEBI" id="CHEBI:16452"/>
        <dbReference type="ChEBI" id="CHEBI:16526"/>
        <dbReference type="ChEBI" id="CHEBI:37565"/>
        <dbReference type="ChEBI" id="CHEBI:58189"/>
        <dbReference type="ChEBI" id="CHEBI:58702"/>
        <dbReference type="EC" id="4.1.1.32"/>
    </reaction>
</comment>
<comment type="cofactor">
    <cofactor evidence="1">
        <name>Mn(2+)</name>
        <dbReference type="ChEBI" id="CHEBI:29035"/>
    </cofactor>
    <text evidence="1">Binds 1 Mn(2+) ion per subunit.</text>
</comment>
<comment type="pathway">
    <text evidence="1">Carbohydrate biosynthesis; gluconeogenesis.</text>
</comment>
<comment type="subunit">
    <text evidence="1">Monomer.</text>
</comment>
<comment type="subcellular location">
    <subcellularLocation>
        <location evidence="1">Cytoplasm</location>
    </subcellularLocation>
</comment>
<comment type="similarity">
    <text evidence="1">Belongs to the phosphoenolpyruvate carboxykinase [GTP] family.</text>
</comment>
<sequence length="611" mass="67530">MTTVNAPEFVRHPKLIAWVEEIANLTKPAKIEWCDGSEEEYQRLIDLMIANGTMQKLNQEKHPGSYLANSDPSDVARVEDRTYICSQNKEDAGATNNWEDPAVMREKLNGLFEGSMKGRTMYVVPFSMGPLGSHIAHIGIELTDSPYVAVSMRKMARMGKAVYDVLGTDGEFVPCVHTVGTPLAEGQKDVAWPCNPEKYIVHYPETREIWSFGSGYGGNALLGKKCLALRIASVMGREQGWLAEHMLILGVTNPQGEKHYIAAAFPSACGKTNFAMLIPPAGYEGWKIETVGDDIAWIKPGEDGRLYAINPEAGFFGVAPGTNTKTNPNCMATLHKDVIYTNVAVTDDGQVWWEGLSKEVPANLTNWKGQPHVNGEKAAHPNARFTVAAGQCPSIDADWENPAGVPISAFIFGGRRADTVPLVSEAFDWVDGVYKAATMGSETTAAAVGQQGIVRRDPFAMLPFAGYNMADYFDHWLNLGAKVSEKAEASGNKLPKIFNVNWFRRDAEGNFVWPGFGQNMRVLEWIIDRCEGRANAVETPIGFVPTYEDLNWEGTEFTKEQFDLITNQDKDQWVTEIESHTELFNKLGERLPKALKERQAALLEAVKLASN</sequence>
<protein>
    <recommendedName>
        <fullName evidence="1">Phosphoenolpyruvate carboxykinase [GTP]</fullName>
        <shortName evidence="1">PEP carboxykinase</shortName>
        <shortName evidence="1">PEPCK</shortName>
        <ecNumber evidence="1">4.1.1.32</ecNumber>
    </recommendedName>
</protein>
<accession>A3M840</accession>
<keyword id="KW-0963">Cytoplasm</keyword>
<keyword id="KW-0210">Decarboxylase</keyword>
<keyword id="KW-0312">Gluconeogenesis</keyword>
<keyword id="KW-0342">GTP-binding</keyword>
<keyword id="KW-0456">Lyase</keyword>
<keyword id="KW-0464">Manganese</keyword>
<keyword id="KW-0479">Metal-binding</keyword>
<keyword id="KW-0547">Nucleotide-binding</keyword>
<reference key="1">
    <citation type="journal article" date="2007" name="Genes Dev.">
        <title>New insights into Acinetobacter baumannii pathogenesis revealed by high-density pyrosequencing and transposon mutagenesis.</title>
        <authorList>
            <person name="Smith M.G."/>
            <person name="Gianoulis T.A."/>
            <person name="Pukatzki S."/>
            <person name="Mekalanos J.J."/>
            <person name="Ornston L.N."/>
            <person name="Gerstein M."/>
            <person name="Snyder M."/>
        </authorList>
    </citation>
    <scope>NUCLEOTIDE SEQUENCE [LARGE SCALE GENOMIC DNA]</scope>
    <source>
        <strain>ATCC 17978 / DSM 105126 / CIP 53.77 / LMG 1025 / NCDC KC755 / 5377</strain>
    </source>
</reference>
<gene>
    <name evidence="1" type="primary">pckG</name>
    <name type="ordered locus">A1S_2668</name>
</gene>
<dbReference type="EC" id="4.1.1.32" evidence="1"/>
<dbReference type="EMBL" id="CP000521">
    <property type="protein sequence ID" value="ABO13084.2"/>
    <property type="molecule type" value="Genomic_DNA"/>
</dbReference>
<dbReference type="SMR" id="A3M840"/>
<dbReference type="KEGG" id="acb:A1S_2668"/>
<dbReference type="HOGENOM" id="CLU_028872_1_1_6"/>
<dbReference type="UniPathway" id="UPA00138"/>
<dbReference type="GO" id="GO:0005829">
    <property type="term" value="C:cytosol"/>
    <property type="evidence" value="ECO:0007669"/>
    <property type="project" value="TreeGrafter"/>
</dbReference>
<dbReference type="GO" id="GO:0005525">
    <property type="term" value="F:GTP binding"/>
    <property type="evidence" value="ECO:0007669"/>
    <property type="project" value="UniProtKB-UniRule"/>
</dbReference>
<dbReference type="GO" id="GO:0030145">
    <property type="term" value="F:manganese ion binding"/>
    <property type="evidence" value="ECO:0007669"/>
    <property type="project" value="UniProtKB-UniRule"/>
</dbReference>
<dbReference type="GO" id="GO:0004613">
    <property type="term" value="F:phosphoenolpyruvate carboxykinase (GTP) activity"/>
    <property type="evidence" value="ECO:0007669"/>
    <property type="project" value="UniProtKB-UniRule"/>
</dbReference>
<dbReference type="GO" id="GO:0071333">
    <property type="term" value="P:cellular response to glucose stimulus"/>
    <property type="evidence" value="ECO:0007669"/>
    <property type="project" value="TreeGrafter"/>
</dbReference>
<dbReference type="GO" id="GO:0006094">
    <property type="term" value="P:gluconeogenesis"/>
    <property type="evidence" value="ECO:0007669"/>
    <property type="project" value="UniProtKB-UniRule"/>
</dbReference>
<dbReference type="GO" id="GO:0046327">
    <property type="term" value="P:glycerol biosynthetic process from pyruvate"/>
    <property type="evidence" value="ECO:0007669"/>
    <property type="project" value="TreeGrafter"/>
</dbReference>
<dbReference type="GO" id="GO:0006107">
    <property type="term" value="P:oxaloacetate metabolic process"/>
    <property type="evidence" value="ECO:0007669"/>
    <property type="project" value="TreeGrafter"/>
</dbReference>
<dbReference type="GO" id="GO:0019543">
    <property type="term" value="P:propionate catabolic process"/>
    <property type="evidence" value="ECO:0007669"/>
    <property type="project" value="TreeGrafter"/>
</dbReference>
<dbReference type="GO" id="GO:0033993">
    <property type="term" value="P:response to lipid"/>
    <property type="evidence" value="ECO:0007669"/>
    <property type="project" value="TreeGrafter"/>
</dbReference>
<dbReference type="GO" id="GO:0042594">
    <property type="term" value="P:response to starvation"/>
    <property type="evidence" value="ECO:0007669"/>
    <property type="project" value="TreeGrafter"/>
</dbReference>
<dbReference type="CDD" id="cd00819">
    <property type="entry name" value="PEPCK_GTP"/>
    <property type="match status" value="1"/>
</dbReference>
<dbReference type="FunFam" id="3.40.449.10:FF:000005">
    <property type="entry name" value="Phosphoenolpyruvate carboxykinase [GTP]"/>
    <property type="match status" value="1"/>
</dbReference>
<dbReference type="Gene3D" id="3.90.228.20">
    <property type="match status" value="1"/>
</dbReference>
<dbReference type="Gene3D" id="3.40.449.10">
    <property type="entry name" value="Phosphoenolpyruvate Carboxykinase, domain 1"/>
    <property type="match status" value="1"/>
</dbReference>
<dbReference type="Gene3D" id="2.170.8.10">
    <property type="entry name" value="Phosphoenolpyruvate Carboxykinase, domain 2"/>
    <property type="match status" value="1"/>
</dbReference>
<dbReference type="HAMAP" id="MF_00452">
    <property type="entry name" value="PEPCK_GTP"/>
    <property type="match status" value="1"/>
</dbReference>
<dbReference type="InterPro" id="IPR018091">
    <property type="entry name" value="PEP_carboxykin_GTP_CS"/>
</dbReference>
<dbReference type="InterPro" id="IPR013035">
    <property type="entry name" value="PEP_carboxykinase_C"/>
</dbReference>
<dbReference type="InterPro" id="IPR008209">
    <property type="entry name" value="PEP_carboxykinase_GTP"/>
</dbReference>
<dbReference type="InterPro" id="IPR035077">
    <property type="entry name" value="PEP_carboxykinase_GTP_C"/>
</dbReference>
<dbReference type="InterPro" id="IPR035078">
    <property type="entry name" value="PEP_carboxykinase_GTP_N"/>
</dbReference>
<dbReference type="InterPro" id="IPR008210">
    <property type="entry name" value="PEP_carboxykinase_N"/>
</dbReference>
<dbReference type="NCBIfam" id="NF003253">
    <property type="entry name" value="PRK04210.1"/>
    <property type="match status" value="1"/>
</dbReference>
<dbReference type="PANTHER" id="PTHR11561">
    <property type="entry name" value="PHOSPHOENOLPYRUVATE CARBOXYKINASE"/>
    <property type="match status" value="1"/>
</dbReference>
<dbReference type="PANTHER" id="PTHR11561:SF0">
    <property type="entry name" value="PHOSPHOENOLPYRUVATE CARBOXYKINASE [GTP]-RELATED"/>
    <property type="match status" value="1"/>
</dbReference>
<dbReference type="Pfam" id="PF00821">
    <property type="entry name" value="PEPCK_GTP"/>
    <property type="match status" value="1"/>
</dbReference>
<dbReference type="Pfam" id="PF17297">
    <property type="entry name" value="PEPCK_N"/>
    <property type="match status" value="1"/>
</dbReference>
<dbReference type="PIRSF" id="PIRSF001348">
    <property type="entry name" value="PEP_carboxykinase_GTP"/>
    <property type="match status" value="1"/>
</dbReference>
<dbReference type="SUPFAM" id="SSF68923">
    <property type="entry name" value="PEP carboxykinase N-terminal domain"/>
    <property type="match status" value="1"/>
</dbReference>
<dbReference type="SUPFAM" id="SSF53795">
    <property type="entry name" value="PEP carboxykinase-like"/>
    <property type="match status" value="1"/>
</dbReference>
<dbReference type="PROSITE" id="PS00505">
    <property type="entry name" value="PEPCK_GTP"/>
    <property type="match status" value="1"/>
</dbReference>
<feature type="chain" id="PRO_1000125041" description="Phosphoenolpyruvate carboxykinase [GTP]">
    <location>
        <begin position="1"/>
        <end position="611"/>
    </location>
</feature>
<feature type="active site" evidence="1">
    <location>
        <position position="269"/>
    </location>
</feature>
<feature type="binding site" evidence="1">
    <location>
        <position position="77"/>
    </location>
    <ligand>
        <name>substrate</name>
    </ligand>
</feature>
<feature type="binding site" evidence="1">
    <location>
        <begin position="216"/>
        <end position="218"/>
    </location>
    <ligand>
        <name>substrate</name>
    </ligand>
</feature>
<feature type="binding site" evidence="1">
    <location>
        <position position="225"/>
    </location>
    <ligand>
        <name>Mn(2+)</name>
        <dbReference type="ChEBI" id="CHEBI:29035"/>
    </ligand>
</feature>
<feature type="binding site" evidence="1">
    <location>
        <position position="245"/>
    </location>
    <ligand>
        <name>Mn(2+)</name>
        <dbReference type="ChEBI" id="CHEBI:29035"/>
    </ligand>
</feature>
<feature type="binding site" evidence="1">
    <location>
        <position position="267"/>
    </location>
    <ligand>
        <name>substrate</name>
    </ligand>
</feature>
<feature type="binding site" evidence="1">
    <location>
        <begin position="268"/>
        <end position="273"/>
    </location>
    <ligand>
        <name>GTP</name>
        <dbReference type="ChEBI" id="CHEBI:37565"/>
    </ligand>
</feature>
<feature type="binding site" evidence="1">
    <location>
        <position position="294"/>
    </location>
    <ligand>
        <name>Mn(2+)</name>
        <dbReference type="ChEBI" id="CHEBI:29035"/>
    </ligand>
</feature>
<feature type="binding site" evidence="1">
    <location>
        <begin position="382"/>
        <end position="384"/>
    </location>
    <ligand>
        <name>substrate</name>
    </ligand>
</feature>
<feature type="binding site" evidence="1">
    <location>
        <position position="384"/>
    </location>
    <ligand>
        <name>GTP</name>
        <dbReference type="ChEBI" id="CHEBI:37565"/>
    </ligand>
</feature>
<feature type="binding site" evidence="1">
    <location>
        <position position="415"/>
    </location>
    <ligand>
        <name>GTP</name>
        <dbReference type="ChEBI" id="CHEBI:37565"/>
    </ligand>
</feature>
<feature type="binding site" evidence="1">
    <location>
        <begin position="516"/>
        <end position="519"/>
    </location>
    <ligand>
        <name>GTP</name>
        <dbReference type="ChEBI" id="CHEBI:37565"/>
    </ligand>
</feature>
<name>PCKG_ACIBT</name>
<evidence type="ECO:0000255" key="1">
    <source>
        <dbReference type="HAMAP-Rule" id="MF_00452"/>
    </source>
</evidence>